<dbReference type="EC" id="2.1.1.166" evidence="1"/>
<dbReference type="EMBL" id="CU468230">
    <property type="protein sequence ID" value="CAP00164.1"/>
    <property type="molecule type" value="Genomic_DNA"/>
</dbReference>
<dbReference type="SMR" id="B0VSM4"/>
<dbReference type="KEGG" id="abm:ABSDF0795"/>
<dbReference type="HOGENOM" id="CLU_009422_4_0_6"/>
<dbReference type="Proteomes" id="UP000001741">
    <property type="component" value="Chromosome"/>
</dbReference>
<dbReference type="GO" id="GO:0005737">
    <property type="term" value="C:cytoplasm"/>
    <property type="evidence" value="ECO:0007669"/>
    <property type="project" value="UniProtKB-SubCell"/>
</dbReference>
<dbReference type="GO" id="GO:0008650">
    <property type="term" value="F:rRNA (uridine-2'-O-)-methyltransferase activity"/>
    <property type="evidence" value="ECO:0007669"/>
    <property type="project" value="UniProtKB-UniRule"/>
</dbReference>
<dbReference type="FunFam" id="3.40.50.150:FF:000005">
    <property type="entry name" value="Ribosomal RNA large subunit methyltransferase E"/>
    <property type="match status" value="1"/>
</dbReference>
<dbReference type="Gene3D" id="3.40.50.150">
    <property type="entry name" value="Vaccinia Virus protein VP39"/>
    <property type="match status" value="1"/>
</dbReference>
<dbReference type="HAMAP" id="MF_01547">
    <property type="entry name" value="RNA_methyltr_E"/>
    <property type="match status" value="1"/>
</dbReference>
<dbReference type="InterPro" id="IPR050082">
    <property type="entry name" value="RNA_methyltr_RlmE"/>
</dbReference>
<dbReference type="InterPro" id="IPR002877">
    <property type="entry name" value="RNA_MeTrfase_FtsJ_dom"/>
</dbReference>
<dbReference type="InterPro" id="IPR015507">
    <property type="entry name" value="rRNA-MeTfrase_E"/>
</dbReference>
<dbReference type="InterPro" id="IPR029063">
    <property type="entry name" value="SAM-dependent_MTases_sf"/>
</dbReference>
<dbReference type="NCBIfam" id="NF008390">
    <property type="entry name" value="PRK11188.1"/>
    <property type="match status" value="1"/>
</dbReference>
<dbReference type="PANTHER" id="PTHR10920">
    <property type="entry name" value="RIBOSOMAL RNA METHYLTRANSFERASE"/>
    <property type="match status" value="1"/>
</dbReference>
<dbReference type="PANTHER" id="PTHR10920:SF18">
    <property type="entry name" value="RRNA METHYLTRANSFERASE 2, MITOCHONDRIAL"/>
    <property type="match status" value="1"/>
</dbReference>
<dbReference type="Pfam" id="PF01728">
    <property type="entry name" value="FtsJ"/>
    <property type="match status" value="1"/>
</dbReference>
<dbReference type="PIRSF" id="PIRSF005461">
    <property type="entry name" value="23S_rRNA_mtase"/>
    <property type="match status" value="1"/>
</dbReference>
<dbReference type="SUPFAM" id="SSF53335">
    <property type="entry name" value="S-adenosyl-L-methionine-dependent methyltransferases"/>
    <property type="match status" value="1"/>
</dbReference>
<evidence type="ECO:0000255" key="1">
    <source>
        <dbReference type="HAMAP-Rule" id="MF_01547"/>
    </source>
</evidence>
<proteinExistence type="inferred from homology"/>
<sequence length="216" mass="23927">MATRITNQKLSKSSRAWMREHLDDPFVKKAQKEGYRARAAYKLLEIQEKYKLIKPGMTVVDLGAAPGSWSQIAGKLVGSKGLVIASDILPMDALPDVTFLQGDFREEAVFEKLLNILNGRQVDIVISDMAPNTSGNRAVDQPRQIYLCELALDFAQKVLGPNGQFVVKVFQGAGFDEFRKQVVDSFDVLKTAKPAASRARSKEVFLVGQGRKKALQ</sequence>
<comment type="function">
    <text evidence="1">Specifically methylates the uridine in position 2552 of 23S rRNA at the 2'-O position of the ribose in the fully assembled 50S ribosomal subunit.</text>
</comment>
<comment type="catalytic activity">
    <reaction evidence="1">
        <text>uridine(2552) in 23S rRNA + S-adenosyl-L-methionine = 2'-O-methyluridine(2552) in 23S rRNA + S-adenosyl-L-homocysteine + H(+)</text>
        <dbReference type="Rhea" id="RHEA:42720"/>
        <dbReference type="Rhea" id="RHEA-COMP:10202"/>
        <dbReference type="Rhea" id="RHEA-COMP:10203"/>
        <dbReference type="ChEBI" id="CHEBI:15378"/>
        <dbReference type="ChEBI" id="CHEBI:57856"/>
        <dbReference type="ChEBI" id="CHEBI:59789"/>
        <dbReference type="ChEBI" id="CHEBI:65315"/>
        <dbReference type="ChEBI" id="CHEBI:74478"/>
        <dbReference type="EC" id="2.1.1.166"/>
    </reaction>
</comment>
<comment type="subcellular location">
    <subcellularLocation>
        <location evidence="1">Cytoplasm</location>
    </subcellularLocation>
</comment>
<comment type="similarity">
    <text evidence="1">Belongs to the class I-like SAM-binding methyltransferase superfamily. RNA methyltransferase RlmE family.</text>
</comment>
<accession>B0VSM4</accession>
<feature type="chain" id="PRO_1000194971" description="Ribosomal RNA large subunit methyltransferase E">
    <location>
        <begin position="1"/>
        <end position="216"/>
    </location>
</feature>
<feature type="active site" description="Proton acceptor" evidence="1">
    <location>
        <position position="168"/>
    </location>
</feature>
<feature type="binding site" evidence="1">
    <location>
        <position position="67"/>
    </location>
    <ligand>
        <name>S-adenosyl-L-methionine</name>
        <dbReference type="ChEBI" id="CHEBI:59789"/>
    </ligand>
</feature>
<feature type="binding site" evidence="1">
    <location>
        <position position="69"/>
    </location>
    <ligand>
        <name>S-adenosyl-L-methionine</name>
        <dbReference type="ChEBI" id="CHEBI:59789"/>
    </ligand>
</feature>
<feature type="binding site" evidence="1">
    <location>
        <position position="87"/>
    </location>
    <ligand>
        <name>S-adenosyl-L-methionine</name>
        <dbReference type="ChEBI" id="CHEBI:59789"/>
    </ligand>
</feature>
<feature type="binding site" evidence="1">
    <location>
        <position position="103"/>
    </location>
    <ligand>
        <name>S-adenosyl-L-methionine</name>
        <dbReference type="ChEBI" id="CHEBI:59789"/>
    </ligand>
</feature>
<feature type="binding site" evidence="1">
    <location>
        <position position="128"/>
    </location>
    <ligand>
        <name>S-adenosyl-L-methionine</name>
        <dbReference type="ChEBI" id="CHEBI:59789"/>
    </ligand>
</feature>
<name>RLME_ACIBS</name>
<gene>
    <name evidence="1" type="primary">rlmE</name>
    <name evidence="1" type="synonym">ftsJ</name>
    <name evidence="1" type="synonym">rrmJ</name>
    <name type="ordered locus">ABSDF0795</name>
</gene>
<protein>
    <recommendedName>
        <fullName evidence="1">Ribosomal RNA large subunit methyltransferase E</fullName>
        <ecNumber evidence="1">2.1.1.166</ecNumber>
    </recommendedName>
    <alternativeName>
        <fullName evidence="1">23S rRNA Um2552 methyltransferase</fullName>
    </alternativeName>
    <alternativeName>
        <fullName evidence="1">rRNA (uridine-2'-O-)-methyltransferase</fullName>
    </alternativeName>
</protein>
<reference key="1">
    <citation type="journal article" date="2008" name="PLoS ONE">
        <title>Comparative analysis of Acinetobacters: three genomes for three lifestyles.</title>
        <authorList>
            <person name="Vallenet D."/>
            <person name="Nordmann P."/>
            <person name="Barbe V."/>
            <person name="Poirel L."/>
            <person name="Mangenot S."/>
            <person name="Bataille E."/>
            <person name="Dossat C."/>
            <person name="Gas S."/>
            <person name="Kreimeyer A."/>
            <person name="Lenoble P."/>
            <person name="Oztas S."/>
            <person name="Poulain J."/>
            <person name="Segurens B."/>
            <person name="Robert C."/>
            <person name="Abergel C."/>
            <person name="Claverie J.-M."/>
            <person name="Raoult D."/>
            <person name="Medigue C."/>
            <person name="Weissenbach J."/>
            <person name="Cruveiller S."/>
        </authorList>
    </citation>
    <scope>NUCLEOTIDE SEQUENCE [LARGE SCALE GENOMIC DNA]</scope>
    <source>
        <strain>SDF</strain>
    </source>
</reference>
<organism>
    <name type="scientific">Acinetobacter baumannii (strain SDF)</name>
    <dbReference type="NCBI Taxonomy" id="509170"/>
    <lineage>
        <taxon>Bacteria</taxon>
        <taxon>Pseudomonadati</taxon>
        <taxon>Pseudomonadota</taxon>
        <taxon>Gammaproteobacteria</taxon>
        <taxon>Moraxellales</taxon>
        <taxon>Moraxellaceae</taxon>
        <taxon>Acinetobacter</taxon>
        <taxon>Acinetobacter calcoaceticus/baumannii complex</taxon>
    </lineage>
</organism>
<keyword id="KW-0963">Cytoplasm</keyword>
<keyword id="KW-0489">Methyltransferase</keyword>
<keyword id="KW-0698">rRNA processing</keyword>
<keyword id="KW-0949">S-adenosyl-L-methionine</keyword>
<keyword id="KW-0808">Transferase</keyword>